<accession>Q2L8Z7</accession>
<gene>
    <name evidence="1" type="primary">atpI</name>
</gene>
<protein>
    <recommendedName>
        <fullName evidence="1">ATP synthase subunit a, chloroplastic</fullName>
    </recommendedName>
    <alternativeName>
        <fullName evidence="1">ATP synthase F0 sector subunit a</fullName>
    </alternativeName>
    <alternativeName>
        <fullName evidence="1">F-ATPase subunit IV</fullName>
    </alternativeName>
</protein>
<evidence type="ECO:0000255" key="1">
    <source>
        <dbReference type="HAMAP-Rule" id="MF_01393"/>
    </source>
</evidence>
<proteinExistence type="inferred from homology"/>
<comment type="function">
    <text evidence="1">Key component of the proton channel; it plays a direct role in the translocation of protons across the membrane.</text>
</comment>
<comment type="subunit">
    <text evidence="1">F-type ATPases have 2 components, CF(1) - the catalytic core - and CF(0) - the membrane proton channel. CF(1) has five subunits: alpha(3), beta(3), gamma(1), delta(1), epsilon(1). CF(0) has four main subunits: a, b, b' and c.</text>
</comment>
<comment type="subcellular location">
    <subcellularLocation>
        <location evidence="1">Plastid</location>
        <location evidence="1">Chloroplast thylakoid membrane</location>
        <topology evidence="1">Multi-pass membrane protein</topology>
    </subcellularLocation>
</comment>
<comment type="similarity">
    <text evidence="1">Belongs to the ATPase A chain family.</text>
</comment>
<sequence>MNGISNALNGLYDISGVEVGQHFYWQIAGFQVHAQVLITSWVVIAILLGSAVIAVRNPQTIPTAGQNFFEYVLEFIRDVSKTQIGEEYGPWVPFIGTMFLFIFVSNWSGALLPWKIIQLPHGELAAPTNDINTTVALALLTSVAYFYAGLSKKGLGYFSKYIQPTPILLPINILEDFTKPLSLSFRLFGNILADELVVVVLVSLVPSVVPIPVMFLGLFTSGIQALIFATLAAAYIGESMEGHH</sequence>
<dbReference type="EMBL" id="DQ345959">
    <property type="protein sequence ID" value="ABC73616.1"/>
    <property type="molecule type" value="Genomic_DNA"/>
</dbReference>
<dbReference type="RefSeq" id="YP_538923.1">
    <property type="nucleotide sequence ID" value="NC_007944.1"/>
</dbReference>
<dbReference type="SMR" id="Q2L8Z7"/>
<dbReference type="GeneID" id="3989193"/>
<dbReference type="KEGG" id="ghi:3989193"/>
<dbReference type="OrthoDB" id="36193at41938"/>
<dbReference type="Proteomes" id="UP000189702">
    <property type="component" value="Chloroplast Pltd"/>
</dbReference>
<dbReference type="GO" id="GO:0009535">
    <property type="term" value="C:chloroplast thylakoid membrane"/>
    <property type="evidence" value="ECO:0007669"/>
    <property type="project" value="UniProtKB-SubCell"/>
</dbReference>
<dbReference type="GO" id="GO:0005886">
    <property type="term" value="C:plasma membrane"/>
    <property type="evidence" value="ECO:0007669"/>
    <property type="project" value="UniProtKB-UniRule"/>
</dbReference>
<dbReference type="GO" id="GO:0045259">
    <property type="term" value="C:proton-transporting ATP synthase complex"/>
    <property type="evidence" value="ECO:0007669"/>
    <property type="project" value="UniProtKB-KW"/>
</dbReference>
<dbReference type="GO" id="GO:0046933">
    <property type="term" value="F:proton-transporting ATP synthase activity, rotational mechanism"/>
    <property type="evidence" value="ECO:0007669"/>
    <property type="project" value="UniProtKB-UniRule"/>
</dbReference>
<dbReference type="CDD" id="cd00310">
    <property type="entry name" value="ATP-synt_Fo_a_6"/>
    <property type="match status" value="1"/>
</dbReference>
<dbReference type="FunFam" id="1.20.120.220:FF:000001">
    <property type="entry name" value="ATP synthase subunit a, chloroplastic"/>
    <property type="match status" value="1"/>
</dbReference>
<dbReference type="Gene3D" id="1.20.120.220">
    <property type="entry name" value="ATP synthase, F0 complex, subunit A"/>
    <property type="match status" value="1"/>
</dbReference>
<dbReference type="HAMAP" id="MF_01393">
    <property type="entry name" value="ATP_synth_a_bact"/>
    <property type="match status" value="1"/>
</dbReference>
<dbReference type="InterPro" id="IPR045082">
    <property type="entry name" value="ATP_syn_F0_a_bact/chloroplast"/>
</dbReference>
<dbReference type="InterPro" id="IPR000568">
    <property type="entry name" value="ATP_synth_F0_asu"/>
</dbReference>
<dbReference type="InterPro" id="IPR023011">
    <property type="entry name" value="ATP_synth_F0_asu_AS"/>
</dbReference>
<dbReference type="InterPro" id="IPR035908">
    <property type="entry name" value="F0_ATP_A_sf"/>
</dbReference>
<dbReference type="NCBIfam" id="TIGR01131">
    <property type="entry name" value="ATP_synt_6_or_A"/>
    <property type="match status" value="1"/>
</dbReference>
<dbReference type="PANTHER" id="PTHR42823">
    <property type="entry name" value="ATP SYNTHASE SUBUNIT A, CHLOROPLASTIC"/>
    <property type="match status" value="1"/>
</dbReference>
<dbReference type="PANTHER" id="PTHR42823:SF3">
    <property type="entry name" value="ATP SYNTHASE SUBUNIT A, CHLOROPLASTIC"/>
    <property type="match status" value="1"/>
</dbReference>
<dbReference type="Pfam" id="PF00119">
    <property type="entry name" value="ATP-synt_A"/>
    <property type="match status" value="1"/>
</dbReference>
<dbReference type="PRINTS" id="PR00123">
    <property type="entry name" value="ATPASEA"/>
</dbReference>
<dbReference type="SUPFAM" id="SSF81336">
    <property type="entry name" value="F1F0 ATP synthase subunit A"/>
    <property type="match status" value="1"/>
</dbReference>
<dbReference type="PROSITE" id="PS00449">
    <property type="entry name" value="ATPASE_A"/>
    <property type="match status" value="1"/>
</dbReference>
<name>ATPI_GOSHI</name>
<organism>
    <name type="scientific">Gossypium hirsutum</name>
    <name type="common">Upland cotton</name>
    <name type="synonym">Gossypium mexicanum</name>
    <dbReference type="NCBI Taxonomy" id="3635"/>
    <lineage>
        <taxon>Eukaryota</taxon>
        <taxon>Viridiplantae</taxon>
        <taxon>Streptophyta</taxon>
        <taxon>Embryophyta</taxon>
        <taxon>Tracheophyta</taxon>
        <taxon>Spermatophyta</taxon>
        <taxon>Magnoliopsida</taxon>
        <taxon>eudicotyledons</taxon>
        <taxon>Gunneridae</taxon>
        <taxon>Pentapetalae</taxon>
        <taxon>rosids</taxon>
        <taxon>malvids</taxon>
        <taxon>Malvales</taxon>
        <taxon>Malvaceae</taxon>
        <taxon>Malvoideae</taxon>
        <taxon>Gossypium</taxon>
    </lineage>
</organism>
<keyword id="KW-0066">ATP synthesis</keyword>
<keyword id="KW-0138">CF(0)</keyword>
<keyword id="KW-0150">Chloroplast</keyword>
<keyword id="KW-0375">Hydrogen ion transport</keyword>
<keyword id="KW-0406">Ion transport</keyword>
<keyword id="KW-0472">Membrane</keyword>
<keyword id="KW-0934">Plastid</keyword>
<keyword id="KW-1185">Reference proteome</keyword>
<keyword id="KW-0793">Thylakoid</keyword>
<keyword id="KW-0812">Transmembrane</keyword>
<keyword id="KW-1133">Transmembrane helix</keyword>
<keyword id="KW-0813">Transport</keyword>
<reference key="1">
    <citation type="journal article" date="2006" name="BMC Genomics">
        <title>The complete chloroplast genome sequence of Gossypium hirsutum: organization and phylogenetic relationships to other angiosperms.</title>
        <authorList>
            <person name="Lee S.-B."/>
            <person name="Kaittanis C."/>
            <person name="Jansen R.K."/>
            <person name="Hostetler J.B."/>
            <person name="Tallon L.J."/>
            <person name="Town C.D."/>
            <person name="Daniell H."/>
        </authorList>
    </citation>
    <scope>NUCLEOTIDE SEQUENCE [LARGE SCALE GENOMIC DNA]</scope>
    <source>
        <strain>cv. Coker 310FR</strain>
    </source>
</reference>
<feature type="chain" id="PRO_0000362558" description="ATP synthase subunit a, chloroplastic">
    <location>
        <begin position="1"/>
        <end position="244"/>
    </location>
</feature>
<feature type="transmembrane region" description="Helical" evidence="1">
    <location>
        <begin position="35"/>
        <end position="55"/>
    </location>
</feature>
<feature type="transmembrane region" description="Helical" evidence="1">
    <location>
        <begin position="92"/>
        <end position="112"/>
    </location>
</feature>
<feature type="transmembrane region" description="Helical" evidence="1">
    <location>
        <begin position="131"/>
        <end position="151"/>
    </location>
</feature>
<feature type="transmembrane region" description="Helical" evidence="1">
    <location>
        <begin position="196"/>
        <end position="216"/>
    </location>
</feature>
<feature type="transmembrane region" description="Helical" evidence="1">
    <location>
        <begin position="217"/>
        <end position="237"/>
    </location>
</feature>
<geneLocation type="chloroplast"/>